<dbReference type="EMBL" id="AF005492">
    <property type="protein sequence ID" value="AAC49832.1"/>
    <property type="molecule type" value="mRNA"/>
</dbReference>
<dbReference type="EMBL" id="AP005735">
    <property type="protein sequence ID" value="BAD33820.1"/>
    <property type="molecule type" value="Genomic_DNA"/>
</dbReference>
<dbReference type="EMBL" id="AP006756">
    <property type="protein sequence ID" value="BAD34440.1"/>
    <property type="molecule type" value="Genomic_DNA"/>
</dbReference>
<dbReference type="EMBL" id="AP014965">
    <property type="protein sequence ID" value="BAT08959.1"/>
    <property type="molecule type" value="Genomic_DNA"/>
</dbReference>
<dbReference type="EMBL" id="AP014965">
    <property type="protein sequence ID" value="BAT08960.1"/>
    <property type="molecule type" value="Genomic_DNA"/>
</dbReference>
<dbReference type="EMBL" id="AK102795">
    <property type="status" value="NOT_ANNOTATED_CDS"/>
    <property type="molecule type" value="mRNA"/>
</dbReference>
<dbReference type="PIR" id="T03580">
    <property type="entry name" value="T03580"/>
</dbReference>
<dbReference type="RefSeq" id="XP_015612692.1">
    <property type="nucleotide sequence ID" value="XM_015757206.1"/>
</dbReference>
<dbReference type="SMR" id="Q69IL4"/>
<dbReference type="FunCoup" id="Q69IL4">
    <property type="interactions" value="676"/>
</dbReference>
<dbReference type="STRING" id="39947.Q69IL4"/>
<dbReference type="iPTMnet" id="Q69IL4"/>
<dbReference type="PaxDb" id="39947-Q69IL4"/>
<dbReference type="EnsemblPlants" id="Os09t0516200-01">
    <molecule id="Q69IL4-1"/>
    <property type="protein sequence ID" value="Os09t0516200-01"/>
    <property type="gene ID" value="Os09g0516200"/>
</dbReference>
<dbReference type="Gramene" id="Os09t0516200-01">
    <molecule id="Q69IL4-1"/>
    <property type="protein sequence ID" value="Os09t0516200-01"/>
    <property type="gene ID" value="Os09g0516200"/>
</dbReference>
<dbReference type="eggNOG" id="ENOG502QTK9">
    <property type="taxonomic scope" value="Eukaryota"/>
</dbReference>
<dbReference type="HOGENOM" id="CLU_026205_0_0_1"/>
<dbReference type="InParanoid" id="Q69IL4"/>
<dbReference type="OMA" id="TGQAMSN"/>
<dbReference type="OrthoDB" id="1435597at2759"/>
<dbReference type="Proteomes" id="UP000000763">
    <property type="component" value="Chromosome 9"/>
</dbReference>
<dbReference type="Proteomes" id="UP000059680">
    <property type="component" value="Chromosome 9"/>
</dbReference>
<dbReference type="ExpressionAtlas" id="Q69IL4">
    <property type="expression patterns" value="baseline and differential"/>
</dbReference>
<dbReference type="GO" id="GO:0005634">
    <property type="term" value="C:nucleus"/>
    <property type="evidence" value="ECO:0000318"/>
    <property type="project" value="GO_Central"/>
</dbReference>
<dbReference type="GO" id="GO:0003677">
    <property type="term" value="F:DNA binding"/>
    <property type="evidence" value="ECO:0007669"/>
    <property type="project" value="UniProtKB-KW"/>
</dbReference>
<dbReference type="GO" id="GO:0003700">
    <property type="term" value="F:DNA-binding transcription factor activity"/>
    <property type="evidence" value="ECO:0000318"/>
    <property type="project" value="GO_Central"/>
</dbReference>
<dbReference type="CDD" id="cd14703">
    <property type="entry name" value="bZIP_plant_RF2"/>
    <property type="match status" value="1"/>
</dbReference>
<dbReference type="FunFam" id="1.20.5.170:FF:000009">
    <property type="entry name" value="probable transcription factor PosF21"/>
    <property type="match status" value="1"/>
</dbReference>
<dbReference type="Gene3D" id="1.20.5.170">
    <property type="match status" value="1"/>
</dbReference>
<dbReference type="InterPro" id="IPR004827">
    <property type="entry name" value="bZIP"/>
</dbReference>
<dbReference type="InterPro" id="IPR044759">
    <property type="entry name" value="bZIP_RF2"/>
</dbReference>
<dbReference type="InterPro" id="IPR046347">
    <property type="entry name" value="bZIP_sf"/>
</dbReference>
<dbReference type="PANTHER" id="PTHR13690">
    <property type="entry name" value="TRANSCRIPTION FACTOR POSF21-RELATED"/>
    <property type="match status" value="1"/>
</dbReference>
<dbReference type="PANTHER" id="PTHR13690:SF124">
    <property type="entry name" value="TRANSCRIPTION FACTOR RF2A"/>
    <property type="match status" value="1"/>
</dbReference>
<dbReference type="Pfam" id="PF00170">
    <property type="entry name" value="bZIP_1"/>
    <property type="match status" value="1"/>
</dbReference>
<dbReference type="SMART" id="SM00338">
    <property type="entry name" value="BRLZ"/>
    <property type="match status" value="1"/>
</dbReference>
<dbReference type="SUPFAM" id="SSF57959">
    <property type="entry name" value="Leucine zipper domain"/>
    <property type="match status" value="1"/>
</dbReference>
<dbReference type="PROSITE" id="PS50217">
    <property type="entry name" value="BZIP"/>
    <property type="match status" value="1"/>
</dbReference>
<reference key="1">
    <citation type="journal article" date="1997" name="EMBO J.">
        <title>RF2a, a bZIP transcriptional activator of the phloem-specific rice tungro bacilliform virus promoter, functions in vascular development.</title>
        <authorList>
            <person name="Yin Y."/>
            <person name="Zhu Q."/>
            <person name="Dai S."/>
            <person name="Lamb C."/>
            <person name="Beachy R.N."/>
        </authorList>
    </citation>
    <scope>NUCLEOTIDE SEQUENCE [MRNA] (ISOFORM 2)</scope>
    <scope>FUNCTION</scope>
    <scope>SUBCELLULAR LOCATION</scope>
    <scope>TISSUE SPECIFICITY</scope>
    <source>
        <strain>cv. Taipei 309</strain>
    </source>
</reference>
<reference key="2">
    <citation type="journal article" date="2005" name="Nature">
        <title>The map-based sequence of the rice genome.</title>
        <authorList>
            <consortium name="International rice genome sequencing project (IRGSP)"/>
        </authorList>
    </citation>
    <scope>NUCLEOTIDE SEQUENCE [LARGE SCALE GENOMIC DNA]</scope>
    <source>
        <strain>cv. Nipponbare</strain>
    </source>
</reference>
<reference key="3">
    <citation type="journal article" date="2013" name="Rice">
        <title>Improvement of the Oryza sativa Nipponbare reference genome using next generation sequence and optical map data.</title>
        <authorList>
            <person name="Kawahara Y."/>
            <person name="de la Bastide M."/>
            <person name="Hamilton J.P."/>
            <person name="Kanamori H."/>
            <person name="McCombie W.R."/>
            <person name="Ouyang S."/>
            <person name="Schwartz D.C."/>
            <person name="Tanaka T."/>
            <person name="Wu J."/>
            <person name="Zhou S."/>
            <person name="Childs K.L."/>
            <person name="Davidson R.M."/>
            <person name="Lin H."/>
            <person name="Quesada-Ocampo L."/>
            <person name="Vaillancourt B."/>
            <person name="Sakai H."/>
            <person name="Lee S.S."/>
            <person name="Kim J."/>
            <person name="Numa H."/>
            <person name="Itoh T."/>
            <person name="Buell C.R."/>
            <person name="Matsumoto T."/>
        </authorList>
    </citation>
    <scope>GENOME REANNOTATION</scope>
    <source>
        <strain>cv. Nipponbare</strain>
    </source>
</reference>
<reference key="4">
    <citation type="journal article" date="2003" name="Science">
        <title>Collection, mapping, and annotation of over 28,000 cDNA clones from japonica rice.</title>
        <authorList>
            <consortium name="The rice full-length cDNA consortium"/>
        </authorList>
    </citation>
    <scope>NUCLEOTIDE SEQUENCE [LARGE SCALE MRNA] (ISOFORM 1)</scope>
    <source>
        <strain>cv. Nipponbare</strain>
    </source>
</reference>
<reference key="5">
    <citation type="journal article" date="2001" name="Proc. Natl. Acad. Sci. U.S.A.">
        <title>Transcription factor RF2a alters expression of the rice tungro bacilliform virus promoter in transgenic tobacco plants.</title>
        <authorList>
            <person name="Petruccelli S."/>
            <person name="Dai S."/>
            <person name="Carcamo R."/>
            <person name="Yin Y."/>
            <person name="Chen S."/>
            <person name="Beachy R.N."/>
        </authorList>
    </citation>
    <scope>FUNCTION</scope>
</reference>
<reference key="6">
    <citation type="journal article" date="2002" name="Plant Cell">
        <title>Rice TATA binding protein interacts functionally with transcription factor IIB and the RF2a bZIP transcriptional activator in an enhanced plant in vitro transcription system.</title>
        <authorList>
            <person name="Zhu Q."/>
            <person name="Ordiz M.I."/>
            <person name="Dabi T."/>
            <person name="Beachy R.N."/>
            <person name="Lamb C."/>
        </authorList>
    </citation>
    <scope>INTERACTION WITH TBP2</scope>
</reference>
<reference key="7">
    <citation type="journal article" date="2003" name="J. Biol. Chem.">
        <title>Functional analysis of RF2a, a rice transcription factor.</title>
        <authorList>
            <person name="Dai S."/>
            <person name="Petruccelli S."/>
            <person name="Ordiz M.I."/>
            <person name="Zhang Z."/>
            <person name="Chen S."/>
            <person name="Beachy R.N."/>
        </authorList>
    </citation>
    <scope>FUNCTION</scope>
    <scope>INTERACTION WITH TBP2</scope>
</reference>
<reference key="8">
    <citation type="journal article" date="2004" name="Proc. Natl. Acad. Sci. U.S.A.">
        <title>RF2b, a rice bZIP transcription activator, interacts with RF2a and is involved in symptom development of rice tungro disease.</title>
        <authorList>
            <person name="Dai S."/>
            <person name="Zhang Z."/>
            <person name="Chen S."/>
            <person name="Beachy R.N."/>
        </authorList>
    </citation>
    <scope>FUNCTION</scope>
    <scope>SUBUNIT</scope>
    <scope>INTERACTION WITH RF2B</scope>
    <scope>TISSUE SPECIFICITY</scope>
</reference>
<proteinExistence type="evidence at protein level"/>
<evidence type="ECO:0000255" key="1">
    <source>
        <dbReference type="PROSITE-ProRule" id="PRU00978"/>
    </source>
</evidence>
<evidence type="ECO:0000256" key="2">
    <source>
        <dbReference type="SAM" id="MobiDB-lite"/>
    </source>
</evidence>
<evidence type="ECO:0000269" key="3">
    <source>
    </source>
</evidence>
<evidence type="ECO:0000269" key="4">
    <source>
    </source>
</evidence>
<evidence type="ECO:0000269" key="5">
    <source>
    </source>
</evidence>
<evidence type="ECO:0000269" key="6">
    <source>
    </source>
</evidence>
<evidence type="ECO:0000269" key="7">
    <source>
    </source>
</evidence>
<evidence type="ECO:0000303" key="8">
    <source>
    </source>
</evidence>
<evidence type="ECO:0000305" key="9"/>
<name>RF2A_ORYSJ</name>
<gene>
    <name type="primary">RF2a</name>
    <name type="ordered locus">Os09g0516200</name>
    <name type="ordered locus">LOC_Os09g34060</name>
    <name type="ORF">OSJNBb0034B12.8</name>
    <name type="ORF">P0450E05.33</name>
</gene>
<comment type="function">
    <text evidence="3 5 6 7">Transcription factor probably involved in vascular development and shoot tissue organization. Binds to the DNA sequence 5'-CCGAGTGTGCCCCTGG-3' present in the promoter region Box II of the phloem-specific rice tungro bacilliform virus (RTBV) promoter. May regulate tissue-specific expression of the RTBV promoter and virus replication.</text>
</comment>
<comment type="subunit">
    <text evidence="4 5 6">Binds DNA as a homodimer or as a heterodimer with RF2b. The heterodimer binds stronger to DNA than the homodimer. Interacts with TBP2.</text>
</comment>
<comment type="subcellular location">
    <subcellularLocation>
        <location evidence="1 7">Nucleus</location>
    </subcellularLocation>
</comment>
<comment type="alternative products">
    <event type="alternative splicing"/>
    <isoform>
        <id>Q69IL4-1</id>
        <name>1</name>
        <sequence type="displayed"/>
    </isoform>
    <isoform>
        <id>Q69IL4-2</id>
        <name>2</name>
        <sequence type="described" ref="VSP_014413"/>
    </isoform>
</comment>
<comment type="tissue specificity">
    <text evidence="6 7">Expressed at high levels in levels in leaf sheath, moderate levels in leaf blade, but not in roots. Predominantly expressed in vascular tissues.</text>
</comment>
<comment type="similarity">
    <text evidence="9">Belongs to the bZIP family.</text>
</comment>
<comment type="sequence caution" evidence="9">
    <conflict type="frameshift">
        <sequence resource="EMBL" id="AK102795"/>
    </conflict>
</comment>
<sequence>MNREKSPIPGDGGDGLPPQATRRAGPPAAAAAAEYDISRMPDFPTRNPGHRRAHSEILSLPEDLDLCAAGGGDGPSLSDENDEELFSMFLDVEKLNSTCGASSEAEAESSSAGAAAAVAAAAAAAAHGARPKHQHSLSMDESMSIKAEELVGASPGTEGMSSAEAKKAVSAAKLAELALVDPKRAKRIWANRQSAARSKERKMRYIAELERKVQTLQTEATTLSAQLALLQRDTSGLTTENSELKLRLQTMEQQVHLQDALNDTLKSEVQRLKVATGQMANGGGMMMNFGGMPHQFGGNQQMFQNNQAMQSMLAAHQLQQLQLHPQAQQQQVLHPQHQQQQPLHPLQAQQLQQAARDLKMKSPMGGQSQWGDGKSGSSGN</sequence>
<protein>
    <recommendedName>
        <fullName>Transcription factor RF2a</fullName>
    </recommendedName>
</protein>
<keyword id="KW-0010">Activator</keyword>
<keyword id="KW-0025">Alternative splicing</keyword>
<keyword id="KW-0238">DNA-binding</keyword>
<keyword id="KW-0539">Nucleus</keyword>
<keyword id="KW-1185">Reference proteome</keyword>
<keyword id="KW-0804">Transcription</keyword>
<keyword id="KW-0805">Transcription regulation</keyword>
<organism>
    <name type="scientific">Oryza sativa subsp. japonica</name>
    <name type="common">Rice</name>
    <dbReference type="NCBI Taxonomy" id="39947"/>
    <lineage>
        <taxon>Eukaryota</taxon>
        <taxon>Viridiplantae</taxon>
        <taxon>Streptophyta</taxon>
        <taxon>Embryophyta</taxon>
        <taxon>Tracheophyta</taxon>
        <taxon>Spermatophyta</taxon>
        <taxon>Magnoliopsida</taxon>
        <taxon>Liliopsida</taxon>
        <taxon>Poales</taxon>
        <taxon>Poaceae</taxon>
        <taxon>BOP clade</taxon>
        <taxon>Oryzoideae</taxon>
        <taxon>Oryzeae</taxon>
        <taxon>Oryzinae</taxon>
        <taxon>Oryza</taxon>
        <taxon>Oryza sativa</taxon>
    </lineage>
</organism>
<feature type="chain" id="PRO_0000076570" description="Transcription factor RF2a">
    <location>
        <begin position="1"/>
        <end position="380"/>
    </location>
</feature>
<feature type="domain" description="bZIP" evidence="1">
    <location>
        <begin position="181"/>
        <end position="244"/>
    </location>
</feature>
<feature type="region of interest" description="Disordered" evidence="2">
    <location>
        <begin position="1"/>
        <end position="57"/>
    </location>
</feature>
<feature type="region of interest" description="Activation of RTBV promoter">
    <location>
        <begin position="56"/>
        <end position="108"/>
    </location>
</feature>
<feature type="region of interest" description="Basic motif" evidence="1">
    <location>
        <begin position="183"/>
        <end position="204"/>
    </location>
</feature>
<feature type="region of interest" description="Leucine-zipper" evidence="1">
    <location>
        <begin position="209"/>
        <end position="244"/>
    </location>
</feature>
<feature type="region of interest" description="Interaction with TBP2">
    <location>
        <begin position="283"/>
        <end position="357"/>
    </location>
</feature>
<feature type="region of interest" description="Disordered" evidence="2">
    <location>
        <begin position="326"/>
        <end position="380"/>
    </location>
</feature>
<feature type="compositionally biased region" description="Low complexity" evidence="2">
    <location>
        <begin position="16"/>
        <end position="33"/>
    </location>
</feature>
<feature type="compositionally biased region" description="Low complexity" evidence="2">
    <location>
        <begin position="326"/>
        <end position="355"/>
    </location>
</feature>
<feature type="splice variant" id="VSP_014413" description="In isoform 2." evidence="8">
    <location>
        <begin position="112"/>
        <end position="123"/>
    </location>
</feature>
<feature type="sequence conflict" description="In Ref. 1; AAC49832." evidence="9" ref="1">
    <original>A</original>
    <variation>V</variation>
    <location>
        <position position="172"/>
    </location>
</feature>
<accession>Q69IL4</accession>
<accession>A0A0P0XPP9</accession>
<accession>O24181</accession>